<reference key="1">
    <citation type="submission" date="2008-06" db="EMBL/GenBank/DDBJ databases">
        <title>Lactobacillus casei BL23 complete genome sequence.</title>
        <authorList>
            <person name="Maze A."/>
            <person name="Boel G."/>
            <person name="Bourand A."/>
            <person name="Loux V."/>
            <person name="Gibrat J.F."/>
            <person name="Zuniga M."/>
            <person name="Hartke A."/>
            <person name="Deutscher J."/>
        </authorList>
    </citation>
    <scope>NUCLEOTIDE SEQUENCE [LARGE SCALE GENOMIC DNA]</scope>
    <source>
        <strain>BL23</strain>
    </source>
</reference>
<gene>
    <name evidence="1" type="primary">rplM</name>
    <name type="ordered locus">LCABL_26330</name>
</gene>
<keyword id="KW-0687">Ribonucleoprotein</keyword>
<keyword id="KW-0689">Ribosomal protein</keyword>
<dbReference type="EMBL" id="FM177140">
    <property type="protein sequence ID" value="CAQ67699.1"/>
    <property type="molecule type" value="Genomic_DNA"/>
</dbReference>
<dbReference type="SMR" id="B3WAI0"/>
<dbReference type="KEGG" id="lcb:LCABL_26330"/>
<dbReference type="HOGENOM" id="CLU_082184_2_2_9"/>
<dbReference type="GO" id="GO:0022625">
    <property type="term" value="C:cytosolic large ribosomal subunit"/>
    <property type="evidence" value="ECO:0007669"/>
    <property type="project" value="TreeGrafter"/>
</dbReference>
<dbReference type="GO" id="GO:0003729">
    <property type="term" value="F:mRNA binding"/>
    <property type="evidence" value="ECO:0007669"/>
    <property type="project" value="TreeGrafter"/>
</dbReference>
<dbReference type="GO" id="GO:0003735">
    <property type="term" value="F:structural constituent of ribosome"/>
    <property type="evidence" value="ECO:0007669"/>
    <property type="project" value="InterPro"/>
</dbReference>
<dbReference type="GO" id="GO:0017148">
    <property type="term" value="P:negative regulation of translation"/>
    <property type="evidence" value="ECO:0007669"/>
    <property type="project" value="TreeGrafter"/>
</dbReference>
<dbReference type="GO" id="GO:0006412">
    <property type="term" value="P:translation"/>
    <property type="evidence" value="ECO:0007669"/>
    <property type="project" value="UniProtKB-UniRule"/>
</dbReference>
<dbReference type="CDD" id="cd00392">
    <property type="entry name" value="Ribosomal_L13"/>
    <property type="match status" value="1"/>
</dbReference>
<dbReference type="FunFam" id="3.90.1180.10:FF:000001">
    <property type="entry name" value="50S ribosomal protein L13"/>
    <property type="match status" value="1"/>
</dbReference>
<dbReference type="Gene3D" id="3.90.1180.10">
    <property type="entry name" value="Ribosomal protein L13"/>
    <property type="match status" value="1"/>
</dbReference>
<dbReference type="HAMAP" id="MF_01366">
    <property type="entry name" value="Ribosomal_uL13"/>
    <property type="match status" value="1"/>
</dbReference>
<dbReference type="InterPro" id="IPR005822">
    <property type="entry name" value="Ribosomal_uL13"/>
</dbReference>
<dbReference type="InterPro" id="IPR005823">
    <property type="entry name" value="Ribosomal_uL13_bac-type"/>
</dbReference>
<dbReference type="InterPro" id="IPR023563">
    <property type="entry name" value="Ribosomal_uL13_CS"/>
</dbReference>
<dbReference type="InterPro" id="IPR036899">
    <property type="entry name" value="Ribosomal_uL13_sf"/>
</dbReference>
<dbReference type="NCBIfam" id="TIGR01066">
    <property type="entry name" value="rplM_bact"/>
    <property type="match status" value="1"/>
</dbReference>
<dbReference type="PANTHER" id="PTHR11545:SF2">
    <property type="entry name" value="LARGE RIBOSOMAL SUBUNIT PROTEIN UL13M"/>
    <property type="match status" value="1"/>
</dbReference>
<dbReference type="PANTHER" id="PTHR11545">
    <property type="entry name" value="RIBOSOMAL PROTEIN L13"/>
    <property type="match status" value="1"/>
</dbReference>
<dbReference type="Pfam" id="PF00572">
    <property type="entry name" value="Ribosomal_L13"/>
    <property type="match status" value="1"/>
</dbReference>
<dbReference type="PIRSF" id="PIRSF002181">
    <property type="entry name" value="Ribosomal_L13"/>
    <property type="match status" value="1"/>
</dbReference>
<dbReference type="SUPFAM" id="SSF52161">
    <property type="entry name" value="Ribosomal protein L13"/>
    <property type="match status" value="1"/>
</dbReference>
<dbReference type="PROSITE" id="PS00783">
    <property type="entry name" value="RIBOSOMAL_L13"/>
    <property type="match status" value="1"/>
</dbReference>
<protein>
    <recommendedName>
        <fullName evidence="1">Large ribosomal subunit protein uL13</fullName>
    </recommendedName>
    <alternativeName>
        <fullName evidence="2">50S ribosomal protein L13</fullName>
    </alternativeName>
</protein>
<sequence>MRTTFLAKPGEIERKWYVVDATDIPLGRLSSVVASILRGKNKPQFTPNVDTGDNVIIINASKLKLTGKKASDKIYYHHSQHPGGLKHEIAGDLLRDNPARLVEYSVKKMLPTKNTLGHQQFLKLHVYAGEEHPHLAQKPEVLDISNLI</sequence>
<comment type="function">
    <text evidence="1">This protein is one of the early assembly proteins of the 50S ribosomal subunit, although it is not seen to bind rRNA by itself. It is important during the early stages of 50S assembly.</text>
</comment>
<comment type="subunit">
    <text evidence="1">Part of the 50S ribosomal subunit.</text>
</comment>
<comment type="similarity">
    <text evidence="1">Belongs to the universal ribosomal protein uL13 family.</text>
</comment>
<accession>B3WAI0</accession>
<evidence type="ECO:0000255" key="1">
    <source>
        <dbReference type="HAMAP-Rule" id="MF_01366"/>
    </source>
</evidence>
<evidence type="ECO:0000305" key="2"/>
<name>RL13_LACCB</name>
<proteinExistence type="inferred from homology"/>
<feature type="chain" id="PRO_1000144143" description="Large ribosomal subunit protein uL13">
    <location>
        <begin position="1"/>
        <end position="148"/>
    </location>
</feature>
<organism>
    <name type="scientific">Lacticaseibacillus casei (strain BL23)</name>
    <name type="common">Lactobacillus casei</name>
    <dbReference type="NCBI Taxonomy" id="543734"/>
    <lineage>
        <taxon>Bacteria</taxon>
        <taxon>Bacillati</taxon>
        <taxon>Bacillota</taxon>
        <taxon>Bacilli</taxon>
        <taxon>Lactobacillales</taxon>
        <taxon>Lactobacillaceae</taxon>
        <taxon>Lacticaseibacillus</taxon>
    </lineage>
</organism>